<dbReference type="EC" id="2.7.10.1" evidence="7 22"/>
<dbReference type="EMBL" id="U28136">
    <property type="protein sequence ID" value="AAA68953.1"/>
    <property type="status" value="ALT_FRAME"/>
    <property type="molecule type" value="mRNA"/>
</dbReference>
<dbReference type="EMBL" id="U18351">
    <property type="protein sequence ID" value="AAC47458.1"/>
    <property type="molecule type" value="Genomic_DNA"/>
</dbReference>
<dbReference type="EMBL" id="AE014297">
    <property type="protein sequence ID" value="AAF55903.2"/>
    <property type="molecule type" value="Genomic_DNA"/>
</dbReference>
<dbReference type="EMBL" id="AE014297">
    <property type="protein sequence ID" value="ACL83549.1"/>
    <property type="molecule type" value="Genomic_DNA"/>
</dbReference>
<dbReference type="EMBL" id="AE014297">
    <property type="protein sequence ID" value="ACL83550.1"/>
    <property type="molecule type" value="Genomic_DNA"/>
</dbReference>
<dbReference type="EMBL" id="AE014297">
    <property type="protein sequence ID" value="ACL83551.1"/>
    <property type="molecule type" value="Genomic_DNA"/>
</dbReference>
<dbReference type="EMBL" id="M14778">
    <property type="protein sequence ID" value="AAA28644.1"/>
    <property type="status" value="ALT_FRAME"/>
    <property type="molecule type" value="mRNA"/>
</dbReference>
<dbReference type="EMBL" id="M13568">
    <property type="protein sequence ID" value="AAA28645.1"/>
    <property type="molecule type" value="Genomic_DNA"/>
</dbReference>
<dbReference type="PIR" id="A56081">
    <property type="entry name" value="A56081"/>
</dbReference>
<dbReference type="PIR" id="S57245">
    <property type="entry name" value="S57245"/>
</dbReference>
<dbReference type="RefSeq" id="NP_001138093.1">
    <property type="nucleotide sequence ID" value="NM_001144621.3"/>
</dbReference>
<dbReference type="RefSeq" id="NP_001138094.1">
    <property type="nucleotide sequence ID" value="NM_001144622.2"/>
</dbReference>
<dbReference type="RefSeq" id="NP_001138095.1">
    <property type="nucleotide sequence ID" value="NM_001144623.2"/>
</dbReference>
<dbReference type="RefSeq" id="NP_524436.2">
    <property type="nucleotide sequence ID" value="NM_079712.6"/>
</dbReference>
<dbReference type="PDB" id="8CLS">
    <property type="method" value="EM"/>
    <property type="resolution" value="4.00 A"/>
    <property type="chains" value="A/B=264-1310"/>
</dbReference>
<dbReference type="PDBsum" id="8CLS"/>
<dbReference type="EMDB" id="EMD-16718"/>
<dbReference type="SMR" id="P09208"/>
<dbReference type="BioGRID" id="67515">
    <property type="interactions" value="84"/>
</dbReference>
<dbReference type="FunCoup" id="P09208">
    <property type="interactions" value="485"/>
</dbReference>
<dbReference type="IntAct" id="P09208">
    <property type="interactions" value="5"/>
</dbReference>
<dbReference type="STRING" id="7227.FBpp0083519"/>
<dbReference type="GlyCosmos" id="P09208">
    <property type="glycosylation" value="21 sites, No reported glycans"/>
</dbReference>
<dbReference type="GlyGen" id="P09208">
    <property type="glycosylation" value="20 sites"/>
</dbReference>
<dbReference type="iPTMnet" id="P09208"/>
<dbReference type="PaxDb" id="7227-FBpp0288669"/>
<dbReference type="EnsemblMetazoa" id="FBtr0084121">
    <property type="protein sequence ID" value="FBpp0083519"/>
    <property type="gene ID" value="FBgn0283499"/>
</dbReference>
<dbReference type="EnsemblMetazoa" id="FBtr0290230">
    <property type="protein sequence ID" value="FBpp0288669"/>
    <property type="gene ID" value="FBgn0283499"/>
</dbReference>
<dbReference type="EnsemblMetazoa" id="FBtr0290231">
    <property type="protein sequence ID" value="FBpp0288670"/>
    <property type="gene ID" value="FBgn0283499"/>
</dbReference>
<dbReference type="EnsemblMetazoa" id="FBtr0290232">
    <property type="protein sequence ID" value="FBpp0288671"/>
    <property type="gene ID" value="FBgn0283499"/>
</dbReference>
<dbReference type="GeneID" id="42549"/>
<dbReference type="KEGG" id="dme:Dmel_CG18402"/>
<dbReference type="AGR" id="FB:FBgn0283499"/>
<dbReference type="CTD" id="42549"/>
<dbReference type="FlyBase" id="FBgn0283499">
    <property type="gene designation" value="InR"/>
</dbReference>
<dbReference type="VEuPathDB" id="VectorBase:FBgn0283499"/>
<dbReference type="eggNOG" id="KOG4258">
    <property type="taxonomic scope" value="Eukaryota"/>
</dbReference>
<dbReference type="GeneTree" id="ENSGT00940000168802"/>
<dbReference type="HOGENOM" id="CLU_000288_166_2_1"/>
<dbReference type="InParanoid" id="P09208"/>
<dbReference type="OMA" id="FRGYAFK"/>
<dbReference type="OrthoDB" id="5809444at2759"/>
<dbReference type="PhylomeDB" id="P09208"/>
<dbReference type="BRENDA" id="2.7.10.1">
    <property type="organism ID" value="1994"/>
</dbReference>
<dbReference type="Reactome" id="R-DME-110478">
    <property type="pathway name" value="Insulin signaling pathway"/>
</dbReference>
<dbReference type="Reactome" id="R-DME-77387">
    <property type="pathway name" value="Insulin receptor recycling"/>
</dbReference>
<dbReference type="Reactome" id="R-DME-9009391">
    <property type="pathway name" value="Extra-nuclear estrogen signaling"/>
</dbReference>
<dbReference type="SignaLink" id="P09208"/>
<dbReference type="BioGRID-ORCS" id="42549">
    <property type="hits" value="0 hits in 3 CRISPR screens"/>
</dbReference>
<dbReference type="ChiTaRS" id="InR">
    <property type="organism name" value="fly"/>
</dbReference>
<dbReference type="GenomeRNAi" id="42549"/>
<dbReference type="PRO" id="PR:P09208"/>
<dbReference type="Proteomes" id="UP000000803">
    <property type="component" value="Chromosome 3R"/>
</dbReference>
<dbReference type="Bgee" id="FBgn0283499">
    <property type="expression patterns" value="Expressed in adult oenocyte (Drosophila) in dorsal vessel heart and 282 other cell types or tissues"/>
</dbReference>
<dbReference type="ExpressionAtlas" id="P09208">
    <property type="expression patterns" value="baseline and differential"/>
</dbReference>
<dbReference type="GO" id="GO:0030424">
    <property type="term" value="C:axon"/>
    <property type="evidence" value="ECO:0000318"/>
    <property type="project" value="GO_Central"/>
</dbReference>
<dbReference type="GO" id="GO:0032584">
    <property type="term" value="C:growth cone membrane"/>
    <property type="evidence" value="ECO:0007669"/>
    <property type="project" value="UniProtKB-SubCell"/>
</dbReference>
<dbReference type="GO" id="GO:0005899">
    <property type="term" value="C:insulin receptor complex"/>
    <property type="evidence" value="ECO:0000314"/>
    <property type="project" value="FlyBase"/>
</dbReference>
<dbReference type="GO" id="GO:0005886">
    <property type="term" value="C:plasma membrane"/>
    <property type="evidence" value="ECO:0000314"/>
    <property type="project" value="FlyBase"/>
</dbReference>
<dbReference type="GO" id="GO:0005524">
    <property type="term" value="F:ATP binding"/>
    <property type="evidence" value="ECO:0007669"/>
    <property type="project" value="UniProtKB-KW"/>
</dbReference>
<dbReference type="GO" id="GO:0042802">
    <property type="term" value="F:identical protein binding"/>
    <property type="evidence" value="ECO:0000353"/>
    <property type="project" value="IntAct"/>
</dbReference>
<dbReference type="GO" id="GO:0043559">
    <property type="term" value="F:insulin binding"/>
    <property type="evidence" value="ECO:0000353"/>
    <property type="project" value="FlyBase"/>
</dbReference>
<dbReference type="GO" id="GO:0005009">
    <property type="term" value="F:insulin receptor activity"/>
    <property type="evidence" value="ECO:0000314"/>
    <property type="project" value="FlyBase"/>
</dbReference>
<dbReference type="GO" id="GO:0043560">
    <property type="term" value="F:insulin receptor substrate binding"/>
    <property type="evidence" value="ECO:0000250"/>
    <property type="project" value="UniProtKB"/>
</dbReference>
<dbReference type="GO" id="GO:0046872">
    <property type="term" value="F:metal ion binding"/>
    <property type="evidence" value="ECO:0007669"/>
    <property type="project" value="UniProtKB-KW"/>
</dbReference>
<dbReference type="GO" id="GO:0043548">
    <property type="term" value="F:phosphatidylinositol 3-kinase binding"/>
    <property type="evidence" value="ECO:0000250"/>
    <property type="project" value="UniProtKB"/>
</dbReference>
<dbReference type="GO" id="GO:0004713">
    <property type="term" value="F:protein tyrosine kinase activity"/>
    <property type="evidence" value="ECO:0000314"/>
    <property type="project" value="UniProtKB"/>
</dbReference>
<dbReference type="GO" id="GO:0017124">
    <property type="term" value="F:SH3 domain binding"/>
    <property type="evidence" value="ECO:0007669"/>
    <property type="project" value="UniProtKB-KW"/>
</dbReference>
<dbReference type="GO" id="GO:0007411">
    <property type="term" value="P:axon guidance"/>
    <property type="evidence" value="ECO:0000315"/>
    <property type="project" value="UniProtKB"/>
</dbReference>
<dbReference type="GO" id="GO:0033500">
    <property type="term" value="P:carbohydrate homeostasis"/>
    <property type="evidence" value="ECO:0000315"/>
    <property type="project" value="FlyBase"/>
</dbReference>
<dbReference type="GO" id="GO:0009267">
    <property type="term" value="P:cellular response to starvation"/>
    <property type="evidence" value="ECO:0000315"/>
    <property type="project" value="FlyBase"/>
</dbReference>
<dbReference type="GO" id="GO:0042632">
    <property type="term" value="P:cholesterol homeostasis"/>
    <property type="evidence" value="ECO:0000315"/>
    <property type="project" value="FlyBase"/>
</dbReference>
<dbReference type="GO" id="GO:0007623">
    <property type="term" value="P:circadian rhythm"/>
    <property type="evidence" value="ECO:0000315"/>
    <property type="project" value="FlyBase"/>
</dbReference>
<dbReference type="GO" id="GO:0008340">
    <property type="term" value="P:determination of adult lifespan"/>
    <property type="evidence" value="ECO:0000315"/>
    <property type="project" value="UniProtKB"/>
</dbReference>
<dbReference type="GO" id="GO:0048589">
    <property type="term" value="P:developmental growth"/>
    <property type="evidence" value="ECO:0000315"/>
    <property type="project" value="FlyBase"/>
</dbReference>
<dbReference type="GO" id="GO:0009792">
    <property type="term" value="P:embryo development ending in birth or egg hatching"/>
    <property type="evidence" value="ECO:0000270"/>
    <property type="project" value="UniProtKB"/>
</dbReference>
<dbReference type="GO" id="GO:0001700">
    <property type="term" value="P:embryonic development via the syncytial blastoderm"/>
    <property type="evidence" value="ECO:0000270"/>
    <property type="project" value="FlyBase"/>
</dbReference>
<dbReference type="GO" id="GO:0048132">
    <property type="term" value="P:female germ-line stem cell asymmetric division"/>
    <property type="evidence" value="ECO:0000315"/>
    <property type="project" value="FlyBase"/>
</dbReference>
<dbReference type="GO" id="GO:0036099">
    <property type="term" value="P:female germ-line stem cell population maintenance"/>
    <property type="evidence" value="ECO:0000315"/>
    <property type="project" value="FlyBase"/>
</dbReference>
<dbReference type="GO" id="GO:0008585">
    <property type="term" value="P:female gonad development"/>
    <property type="evidence" value="ECO:0000315"/>
    <property type="project" value="FlyBase"/>
</dbReference>
<dbReference type="GO" id="GO:0060180">
    <property type="term" value="P:female mating behavior"/>
    <property type="evidence" value="ECO:0000315"/>
    <property type="project" value="FlyBase"/>
</dbReference>
<dbReference type="GO" id="GO:0030707">
    <property type="term" value="P:follicle cell of egg chamber development"/>
    <property type="evidence" value="ECO:0000315"/>
    <property type="project" value="FlyBase"/>
</dbReference>
<dbReference type="GO" id="GO:0007390">
    <property type="term" value="P:germ-band shortening"/>
    <property type="evidence" value="ECO:0000316"/>
    <property type="project" value="FlyBase"/>
</dbReference>
<dbReference type="GO" id="GO:0042078">
    <property type="term" value="P:germ-line stem cell division"/>
    <property type="evidence" value="ECO:0000315"/>
    <property type="project" value="FlyBase"/>
</dbReference>
<dbReference type="GO" id="GO:0060250">
    <property type="term" value="P:germ-line stem-cell niche homeostasis"/>
    <property type="evidence" value="ECO:0000315"/>
    <property type="project" value="FlyBase"/>
</dbReference>
<dbReference type="GO" id="GO:0042593">
    <property type="term" value="P:glucose homeostasis"/>
    <property type="evidence" value="ECO:0000315"/>
    <property type="project" value="FlyBase"/>
</dbReference>
<dbReference type="GO" id="GO:0007446">
    <property type="term" value="P:imaginal disc growth"/>
    <property type="evidence" value="ECO:0000315"/>
    <property type="project" value="FlyBase"/>
</dbReference>
<dbReference type="GO" id="GO:0008286">
    <property type="term" value="P:insulin receptor signaling pathway"/>
    <property type="evidence" value="ECO:0000314"/>
    <property type="project" value="FlyBase"/>
</dbReference>
<dbReference type="GO" id="GO:0036335">
    <property type="term" value="P:intestinal stem cell homeostasis"/>
    <property type="evidence" value="ECO:0000316"/>
    <property type="project" value="FlyBase"/>
</dbReference>
<dbReference type="GO" id="GO:0055088">
    <property type="term" value="P:lipid homeostasis"/>
    <property type="evidence" value="ECO:0000315"/>
    <property type="project" value="FlyBase"/>
</dbReference>
<dbReference type="GO" id="GO:0007626">
    <property type="term" value="P:locomotory behavior"/>
    <property type="evidence" value="ECO:0000315"/>
    <property type="project" value="FlyBase"/>
</dbReference>
<dbReference type="GO" id="GO:0048542">
    <property type="term" value="P:lymph gland development"/>
    <property type="evidence" value="ECO:0000315"/>
    <property type="project" value="FlyBase"/>
</dbReference>
<dbReference type="GO" id="GO:0048133">
    <property type="term" value="P:male germ-line stem cell asymmetric division"/>
    <property type="evidence" value="ECO:0000315"/>
    <property type="project" value="FlyBase"/>
</dbReference>
<dbReference type="GO" id="GO:0035264">
    <property type="term" value="P:multicellular organism growth"/>
    <property type="evidence" value="ECO:0000315"/>
    <property type="project" value="FlyBase"/>
</dbReference>
<dbReference type="GO" id="GO:0042321">
    <property type="term" value="P:negative regulation of circadian sleep/wake cycle, sleep"/>
    <property type="evidence" value="ECO:0000315"/>
    <property type="project" value="FlyBase"/>
</dbReference>
<dbReference type="GO" id="GO:0061964">
    <property type="term" value="P:negative regulation of entry into reproductive diapause"/>
    <property type="evidence" value="ECO:0000315"/>
    <property type="project" value="FlyBase"/>
</dbReference>
<dbReference type="GO" id="GO:2000252">
    <property type="term" value="P:negative regulation of feeding behavior"/>
    <property type="evidence" value="ECO:0000315"/>
    <property type="project" value="FlyBase"/>
</dbReference>
<dbReference type="GO" id="GO:0016242">
    <property type="term" value="P:negative regulation of macroautophagy"/>
    <property type="evidence" value="ECO:0000315"/>
    <property type="project" value="FlyBase"/>
</dbReference>
<dbReference type="GO" id="GO:0090278">
    <property type="term" value="P:negative regulation of peptide hormone secretion"/>
    <property type="evidence" value="ECO:0000315"/>
    <property type="project" value="FlyBase"/>
</dbReference>
<dbReference type="GO" id="GO:0007399">
    <property type="term" value="P:nervous system development"/>
    <property type="evidence" value="ECO:0000315"/>
    <property type="project" value="UniProtKB"/>
</dbReference>
<dbReference type="GO" id="GO:0007424">
    <property type="term" value="P:open tracheal system development"/>
    <property type="evidence" value="ECO:0007001"/>
    <property type="project" value="FlyBase"/>
</dbReference>
<dbReference type="GO" id="GO:1903688">
    <property type="term" value="P:positive regulation of border follicle cell migration"/>
    <property type="evidence" value="ECO:0000315"/>
    <property type="project" value="FlyBase"/>
</dbReference>
<dbReference type="GO" id="GO:0030307">
    <property type="term" value="P:positive regulation of cell growth"/>
    <property type="evidence" value="ECO:0000315"/>
    <property type="project" value="UniProtKB"/>
</dbReference>
<dbReference type="GO" id="GO:0008284">
    <property type="term" value="P:positive regulation of cell population proliferation"/>
    <property type="evidence" value="ECO:0000315"/>
    <property type="project" value="UniProtKB"/>
</dbReference>
<dbReference type="GO" id="GO:0045793">
    <property type="term" value="P:positive regulation of cell size"/>
    <property type="evidence" value="ECO:0000315"/>
    <property type="project" value="FlyBase"/>
</dbReference>
<dbReference type="GO" id="GO:0070346">
    <property type="term" value="P:positive regulation of fat cell proliferation"/>
    <property type="evidence" value="ECO:0000315"/>
    <property type="project" value="FlyBase"/>
</dbReference>
<dbReference type="GO" id="GO:0010884">
    <property type="term" value="P:positive regulation of lipid storage"/>
    <property type="evidence" value="ECO:0000315"/>
    <property type="project" value="FlyBase"/>
</dbReference>
<dbReference type="GO" id="GO:0043410">
    <property type="term" value="P:positive regulation of MAPK cascade"/>
    <property type="evidence" value="ECO:0000318"/>
    <property type="project" value="GO_Central"/>
</dbReference>
<dbReference type="GO" id="GO:0040018">
    <property type="term" value="P:positive regulation of multicellular organism growth"/>
    <property type="evidence" value="ECO:0000315"/>
    <property type="project" value="UniProtKB"/>
</dbReference>
<dbReference type="GO" id="GO:0002052">
    <property type="term" value="P:positive regulation of neuroblast proliferation"/>
    <property type="evidence" value="ECO:0000316"/>
    <property type="project" value="FlyBase"/>
</dbReference>
<dbReference type="GO" id="GO:1904801">
    <property type="term" value="P:positive regulation of neuron remodeling"/>
    <property type="evidence" value="ECO:0000315"/>
    <property type="project" value="FlyBase"/>
</dbReference>
<dbReference type="GO" id="GO:0046622">
    <property type="term" value="P:positive regulation of organ growth"/>
    <property type="evidence" value="ECO:0000315"/>
    <property type="project" value="UniProtKB"/>
</dbReference>
<dbReference type="GO" id="GO:0051897">
    <property type="term" value="P:positive regulation of phosphatidylinositol 3-kinase/protein kinase B signal transduction"/>
    <property type="evidence" value="ECO:0000315"/>
    <property type="project" value="FlyBase"/>
</dbReference>
<dbReference type="GO" id="GO:1904263">
    <property type="term" value="P:positive regulation of TORC1 signaling"/>
    <property type="evidence" value="ECO:0000315"/>
    <property type="project" value="FlyBase"/>
</dbReference>
<dbReference type="GO" id="GO:0090303">
    <property type="term" value="P:positive regulation of wound healing"/>
    <property type="evidence" value="ECO:0000315"/>
    <property type="project" value="FlyBase"/>
</dbReference>
<dbReference type="GO" id="GO:0007285">
    <property type="term" value="P:primary spermatocyte growth"/>
    <property type="evidence" value="ECO:0000315"/>
    <property type="project" value="FlyBase"/>
</dbReference>
<dbReference type="GO" id="GO:0046777">
    <property type="term" value="P:protein autophosphorylation"/>
    <property type="evidence" value="ECO:0000250"/>
    <property type="project" value="UniProtKB"/>
</dbReference>
<dbReference type="GO" id="GO:0006468">
    <property type="term" value="P:protein phosphorylation"/>
    <property type="evidence" value="ECO:0000315"/>
    <property type="project" value="UniProtKB"/>
</dbReference>
<dbReference type="GO" id="GO:0042127">
    <property type="term" value="P:regulation of cell population proliferation"/>
    <property type="evidence" value="ECO:0000315"/>
    <property type="project" value="FlyBase"/>
</dbReference>
<dbReference type="GO" id="GO:0040014">
    <property type="term" value="P:regulation of multicellular organism growth"/>
    <property type="evidence" value="ECO:0000315"/>
    <property type="project" value="FlyBase"/>
</dbReference>
<dbReference type="GO" id="GO:0046620">
    <property type="term" value="P:regulation of organ growth"/>
    <property type="evidence" value="ECO:0000315"/>
    <property type="project" value="FlyBase"/>
</dbReference>
<dbReference type="GO" id="GO:0034059">
    <property type="term" value="P:response to anoxia"/>
    <property type="evidence" value="ECO:0000314"/>
    <property type="project" value="FlyBase"/>
</dbReference>
<dbReference type="GO" id="GO:0042220">
    <property type="term" value="P:response to cocaine"/>
    <property type="evidence" value="ECO:0000316"/>
    <property type="project" value="FlyBase"/>
</dbReference>
<dbReference type="GO" id="GO:0006979">
    <property type="term" value="P:response to oxidative stress"/>
    <property type="evidence" value="ECO:0000315"/>
    <property type="project" value="FlyBase"/>
</dbReference>
<dbReference type="GO" id="GO:0070328">
    <property type="term" value="P:triglyceride homeostasis"/>
    <property type="evidence" value="ECO:0000315"/>
    <property type="project" value="FlyBase"/>
</dbReference>
<dbReference type="CDD" id="cd00063">
    <property type="entry name" value="FN3"/>
    <property type="match status" value="1"/>
</dbReference>
<dbReference type="CDD" id="cd00064">
    <property type="entry name" value="FU"/>
    <property type="match status" value="1"/>
</dbReference>
<dbReference type="CDD" id="cd05032">
    <property type="entry name" value="PTKc_InsR_like"/>
    <property type="match status" value="1"/>
</dbReference>
<dbReference type="FunFam" id="3.80.20.20:FF:000018">
    <property type="entry name" value="Insulin-like receptor"/>
    <property type="match status" value="1"/>
</dbReference>
<dbReference type="FunFam" id="1.10.510.10:FF:000528">
    <property type="entry name" value="Tyrosine-protein kinase receptor"/>
    <property type="match status" value="1"/>
</dbReference>
<dbReference type="FunFam" id="2.60.40.10:FF:001941">
    <property type="entry name" value="Tyrosine-protein kinase receptor"/>
    <property type="match status" value="1"/>
</dbReference>
<dbReference type="FunFam" id="3.30.200.20:FF:000026">
    <property type="entry name" value="Tyrosine-protein kinase receptor"/>
    <property type="match status" value="1"/>
</dbReference>
<dbReference type="Gene3D" id="2.10.220.10">
    <property type="entry name" value="Hormone Receptor, Insulin-like Growth Factor Receptor 1, Chain A, domain 2"/>
    <property type="match status" value="1"/>
</dbReference>
<dbReference type="Gene3D" id="2.60.40.10">
    <property type="entry name" value="Immunoglobulins"/>
    <property type="match status" value="4"/>
</dbReference>
<dbReference type="Gene3D" id="3.30.200.20">
    <property type="entry name" value="Phosphorylase Kinase, domain 1"/>
    <property type="match status" value="1"/>
</dbReference>
<dbReference type="Gene3D" id="3.80.20.20">
    <property type="entry name" value="Receptor L-domain"/>
    <property type="match status" value="2"/>
</dbReference>
<dbReference type="Gene3D" id="1.10.510.10">
    <property type="entry name" value="Transferase(Phosphotransferase) domain 1"/>
    <property type="match status" value="1"/>
</dbReference>
<dbReference type="InterPro" id="IPR003961">
    <property type="entry name" value="FN3_dom"/>
</dbReference>
<dbReference type="InterPro" id="IPR036116">
    <property type="entry name" value="FN3_sf"/>
</dbReference>
<dbReference type="InterPro" id="IPR006211">
    <property type="entry name" value="Furin-like_Cys-rich_dom"/>
</dbReference>
<dbReference type="InterPro" id="IPR006212">
    <property type="entry name" value="Furin_repeat"/>
</dbReference>
<dbReference type="InterPro" id="IPR009030">
    <property type="entry name" value="Growth_fac_rcpt_cys_sf"/>
</dbReference>
<dbReference type="InterPro" id="IPR013783">
    <property type="entry name" value="Ig-like_fold"/>
</dbReference>
<dbReference type="InterPro" id="IPR011009">
    <property type="entry name" value="Kinase-like_dom_sf"/>
</dbReference>
<dbReference type="InterPro" id="IPR000719">
    <property type="entry name" value="Prot_kinase_dom"/>
</dbReference>
<dbReference type="InterPro" id="IPR017441">
    <property type="entry name" value="Protein_kinase_ATP_BS"/>
</dbReference>
<dbReference type="InterPro" id="IPR000494">
    <property type="entry name" value="Rcpt_L-dom"/>
</dbReference>
<dbReference type="InterPro" id="IPR036941">
    <property type="entry name" value="Rcpt_L-dom_sf"/>
</dbReference>
<dbReference type="InterPro" id="IPR050122">
    <property type="entry name" value="RTK"/>
</dbReference>
<dbReference type="InterPro" id="IPR001245">
    <property type="entry name" value="Ser-Thr/Tyr_kinase_cat_dom"/>
</dbReference>
<dbReference type="InterPro" id="IPR008266">
    <property type="entry name" value="Tyr_kinase_AS"/>
</dbReference>
<dbReference type="InterPro" id="IPR020635">
    <property type="entry name" value="Tyr_kinase_cat_dom"/>
</dbReference>
<dbReference type="InterPro" id="IPR002011">
    <property type="entry name" value="Tyr_kinase_rcpt_2_CS"/>
</dbReference>
<dbReference type="PANTHER" id="PTHR24416:SF525">
    <property type="entry name" value="INSULIN-LIKE RECEPTOR"/>
    <property type="match status" value="1"/>
</dbReference>
<dbReference type="PANTHER" id="PTHR24416">
    <property type="entry name" value="TYROSINE-PROTEIN KINASE RECEPTOR"/>
    <property type="match status" value="1"/>
</dbReference>
<dbReference type="Pfam" id="PF00041">
    <property type="entry name" value="fn3"/>
    <property type="match status" value="1"/>
</dbReference>
<dbReference type="Pfam" id="PF00757">
    <property type="entry name" value="Furin-like"/>
    <property type="match status" value="1"/>
</dbReference>
<dbReference type="Pfam" id="PF07714">
    <property type="entry name" value="PK_Tyr_Ser-Thr"/>
    <property type="match status" value="1"/>
</dbReference>
<dbReference type="Pfam" id="PF01030">
    <property type="entry name" value="Recep_L_domain"/>
    <property type="match status" value="2"/>
</dbReference>
<dbReference type="PRINTS" id="PR00109">
    <property type="entry name" value="TYRKINASE"/>
</dbReference>
<dbReference type="SMART" id="SM00060">
    <property type="entry name" value="FN3"/>
    <property type="match status" value="3"/>
</dbReference>
<dbReference type="SMART" id="SM00261">
    <property type="entry name" value="FU"/>
    <property type="match status" value="1"/>
</dbReference>
<dbReference type="SMART" id="SM00219">
    <property type="entry name" value="TyrKc"/>
    <property type="match status" value="1"/>
</dbReference>
<dbReference type="SUPFAM" id="SSF49265">
    <property type="entry name" value="Fibronectin type III"/>
    <property type="match status" value="2"/>
</dbReference>
<dbReference type="SUPFAM" id="SSF57184">
    <property type="entry name" value="Growth factor receptor domain"/>
    <property type="match status" value="1"/>
</dbReference>
<dbReference type="SUPFAM" id="SSF52058">
    <property type="entry name" value="L domain-like"/>
    <property type="match status" value="2"/>
</dbReference>
<dbReference type="SUPFAM" id="SSF56112">
    <property type="entry name" value="Protein kinase-like (PK-like)"/>
    <property type="match status" value="1"/>
</dbReference>
<dbReference type="PROSITE" id="PS50853">
    <property type="entry name" value="FN3"/>
    <property type="match status" value="3"/>
</dbReference>
<dbReference type="PROSITE" id="PS01352">
    <property type="entry name" value="HEMATOPO_REC_L_F1"/>
    <property type="match status" value="1"/>
</dbReference>
<dbReference type="PROSITE" id="PS00107">
    <property type="entry name" value="PROTEIN_KINASE_ATP"/>
    <property type="match status" value="1"/>
</dbReference>
<dbReference type="PROSITE" id="PS50011">
    <property type="entry name" value="PROTEIN_KINASE_DOM"/>
    <property type="match status" value="1"/>
</dbReference>
<dbReference type="PROSITE" id="PS00109">
    <property type="entry name" value="PROTEIN_KINASE_TYR"/>
    <property type="match status" value="1"/>
</dbReference>
<dbReference type="PROSITE" id="PS00239">
    <property type="entry name" value="RECEPTOR_TYR_KIN_II"/>
    <property type="match status" value="1"/>
</dbReference>
<organism>
    <name type="scientific">Drosophila melanogaster</name>
    <name type="common">Fruit fly</name>
    <dbReference type="NCBI Taxonomy" id="7227"/>
    <lineage>
        <taxon>Eukaryota</taxon>
        <taxon>Metazoa</taxon>
        <taxon>Ecdysozoa</taxon>
        <taxon>Arthropoda</taxon>
        <taxon>Hexapoda</taxon>
        <taxon>Insecta</taxon>
        <taxon>Pterygota</taxon>
        <taxon>Neoptera</taxon>
        <taxon>Endopterygota</taxon>
        <taxon>Diptera</taxon>
        <taxon>Brachycera</taxon>
        <taxon>Muscomorpha</taxon>
        <taxon>Ephydroidea</taxon>
        <taxon>Drosophilidae</taxon>
        <taxon>Drosophila</taxon>
        <taxon>Sophophora</taxon>
    </lineage>
</organism>
<proteinExistence type="evidence at protein level"/>
<gene>
    <name evidence="27" type="primary">InR</name>
    <name evidence="27" type="synonym">Dir-a</name>
    <name evidence="27" type="synonym">Inr-a</name>
    <name evidence="27" type="synonym">IR</name>
    <name evidence="27" type="ORF">CG18402</name>
</gene>
<keyword id="KW-0002">3D-structure</keyword>
<keyword id="KW-0067">ATP-binding</keyword>
<keyword id="KW-1003">Cell membrane</keyword>
<keyword id="KW-0966">Cell projection</keyword>
<keyword id="KW-0165">Cleavage on pair of basic residues</keyword>
<keyword id="KW-0217">Developmental protein</keyword>
<keyword id="KW-0221">Differentiation</keyword>
<keyword id="KW-1015">Disulfide bond</keyword>
<keyword id="KW-0325">Glycoprotein</keyword>
<keyword id="KW-0341">Growth regulation</keyword>
<keyword id="KW-0418">Kinase</keyword>
<keyword id="KW-0464">Manganese</keyword>
<keyword id="KW-0472">Membrane</keyword>
<keyword id="KW-0479">Metal-binding</keyword>
<keyword id="KW-0524">Neurogenesis</keyword>
<keyword id="KW-0547">Nucleotide-binding</keyword>
<keyword id="KW-0597">Phosphoprotein</keyword>
<keyword id="KW-0675">Receptor</keyword>
<keyword id="KW-1185">Reference proteome</keyword>
<keyword id="KW-0677">Repeat</keyword>
<keyword id="KW-0729">SH3-binding</keyword>
<keyword id="KW-0732">Signal</keyword>
<keyword id="KW-0808">Transferase</keyword>
<keyword id="KW-0812">Transmembrane</keyword>
<keyword id="KW-1133">Transmembrane helix</keyword>
<keyword id="KW-0829">Tyrosine-protein kinase</keyword>
<accession>P09208</accession>
<accession>B7Z0N6</accession>
<accession>Q24023</accession>
<accession>Q24089</accession>
<accession>Q9VD94</accession>
<comment type="function">
    <text evidence="9 10 11 12 19 20 21 22">Has a ligand-stimulated tyrosine-protein kinase activity (PubMed:7628438, PubMed:8603594). Binds 3 insulin-like peptide ligands (PubMed:37805602). Regulates cell number and cell size during development by regulating cell growth and survival, affecting body size and organ size, including ovaries and imaginal disks (PubMed:10455177, PubMed:11250149, PubMed:8603594). Plays a role in life-span determination (PubMed:11292875). May be involved in regulation of other neuroendocrine signaling pathways (PubMed:11292875). Involved in the development of the embryonic nervous system (PubMed:7628438). Functions upstream of dock/dreadlocks for photoreceptor (R cell) axon guidance and targeting in the visual system (PubMed:12702880). Involved in the acs mediated recovery of gut enterocytes following the cytoplasmic purge response to intestinal bacterial infection (PubMed:37636057).</text>
</comment>
<comment type="catalytic activity">
    <reaction evidence="7 21 22">
        <text>L-tyrosyl-[protein] + ATP = O-phospho-L-tyrosyl-[protein] + ADP + H(+)</text>
        <dbReference type="Rhea" id="RHEA:10596"/>
        <dbReference type="Rhea" id="RHEA-COMP:10136"/>
        <dbReference type="Rhea" id="RHEA-COMP:20101"/>
        <dbReference type="ChEBI" id="CHEBI:15378"/>
        <dbReference type="ChEBI" id="CHEBI:30616"/>
        <dbReference type="ChEBI" id="CHEBI:46858"/>
        <dbReference type="ChEBI" id="CHEBI:61978"/>
        <dbReference type="ChEBI" id="CHEBI:456216"/>
        <dbReference type="EC" id="2.7.10.1"/>
    </reaction>
</comment>
<comment type="cofactor">
    <cofactor evidence="1">
        <name>Mn(2+)</name>
        <dbReference type="ChEBI" id="CHEBI:29035"/>
    </cofactor>
</comment>
<comment type="activity regulation">
    <text evidence="11 21 22">Activated in response to insulin (PubMed:11292875, PubMed:7628438, PubMed:8603594). Autophosphorylation activates the kinase activity.</text>
</comment>
<comment type="subunit">
    <text evidence="2 9 12 16 20">Tetramer of 2 alpha and 2 beta chains linked by disulfide bonds (PubMed:37805602). The alpha chains contribute to the formation of the ligand-binding domain, while the beta chains carry the kinase domain (By similarity). Interacts (via C-terminal cytoplasmic region) with dock/dreadlocks (via SH2 and SH3 domains); when autophosphorylated (PubMed:12702880). May interact (via beta subunit) with chico/IRS-1; this interaction may lead to tyrosine phosphorylation of the insulin receptor substrate chico (PubMed:10455177). Interacts with Elp6; the interaction may stabilize Elp6 (PubMed:22645656).</text>
</comment>
<comment type="interaction">
    <interactant intactId="EBI-92063">
        <id>P09208</id>
    </interactant>
    <interactant intactId="EBI-176370">
        <id>Q9XTN2</id>
        <label>chico</label>
    </interactant>
    <organismsDiffer>false</organismsDiffer>
    <experiments>3</experiments>
</comment>
<comment type="interaction">
    <interactant intactId="EBI-92063">
        <id>P09208</id>
    </interactant>
    <interactant intactId="EBI-92063">
        <id>P09208</id>
        <label>InR</label>
    </interactant>
    <organismsDiffer>false</organismsDiffer>
    <experiments>2</experiments>
</comment>
<comment type="subcellular location">
    <subcellularLocation>
        <location evidence="3">Membrane</location>
        <topology evidence="3">Single-pass type I membrane protein</topology>
    </subcellularLocation>
    <subcellularLocation>
        <location evidence="12">Cell projection</location>
        <location evidence="12">Axon</location>
    </subcellularLocation>
    <subcellularLocation>
        <location evidence="12">Cell projection</location>
        <location evidence="12">Growth cone membrane</location>
        <topology evidence="3">Single-pass type I membrane protein</topology>
    </subcellularLocation>
    <text evidence="12">Enriched in the axons and growth cones of R cells.</text>
</comment>
<comment type="developmental stage">
    <text evidence="12 17 18 21">Abundantly and widely expressed throughout embryogenesis with peak expression between 8 and 12 hours after egg laying (PubMed:2454394, PubMed:3014506, PubMed:7628438). By stages 9-11 enriched in all three germ layers, including in the posterior midgut primordium, epidermis and neuroblasts with lower levels in the mesoderm (PubMed:7628438). By stage 12 highly expressed throughout the epidermis, in the migrating midgut primordia, hindgut and in the developing ventral cord (PubMed:7628438). By stage 16 expression in the epidermis and gut declines but persists in ventral cord and developing brain (PubMed:2454394, PubMed:7628438). In larvae expression is limited to nervous system and imaginal disks (PubMed:2454394). In third-instar larvae, protein is ubiquitously present but enriched in photoreceptor cells (R cells) of the eye-brain complex (PubMed:12702880). Expressed at high levels in the adult nervous system and ovaries (PubMed:2454394).</text>
</comment>
<comment type="PTM">
    <text evidence="21">The 280 kDa proreceptor is proteolytically processed to form a 120 kDa alpha subunit and a 170 kDa beta subunit. The beta subunit undergoes cell-specific cleavage to generate a 90 kDa beta subunit and a free 60 kDa C-terminal subunit. Both the 90 kDa and the 170 kDa beta subunits can assemble with the alpha subunits to form mature receptors.</text>
</comment>
<comment type="PTM">
    <text evidence="12 13 15 18">Autophosphorylated on tyrosine residues, including Tyr-1549 and Tyr-1550, in response to exogenous insulin (PubMed:12702880, PubMed:18327897, PubMed:21707536, PubMed:3014506). Tyr-1549 and Tyr-1550 are dephosphorylated by Ptp61F recruited by the dock/dreadlocks adapter protein (PubMed:21707536).</text>
</comment>
<comment type="PTM">
    <text evidence="1">Phosphorylation of Tyr-1354 is required for Chico-binding.</text>
</comment>
<comment type="disruption phenotype">
    <text evidence="16 19 21">Embryonic lethal (PubMed:7628438). A small number of individuals survive to late larval stage with a phenotype resembling Elp6 mutants, spending twice as long in third instar stage, and developing melanotic masses in the hemolymph (PubMed:22645656). RNAi-mediated knockdown in gut enterocytes impairs recovery of intestinal wall thickness after the cytoplasmic purge response to intestinal bacterial infection (PubMed:37636057).</text>
</comment>
<comment type="similarity">
    <text evidence="4">Belongs to the protein kinase superfamily. Tyr protein kinase family. Insulin receptor subfamily.</text>
</comment>
<comment type="sequence caution" evidence="26">
    <conflict type="frameshift">
        <sequence resource="EMBL-CDS" id="AAA28644"/>
    </conflict>
</comment>
<comment type="sequence caution" evidence="26">
    <conflict type="frameshift">
        <sequence resource="EMBL-CDS" id="AAA68953"/>
    </conflict>
</comment>
<evidence type="ECO:0000250" key="1"/>
<evidence type="ECO:0000250" key="2">
    <source>
        <dbReference type="UniProtKB" id="P06213"/>
    </source>
</evidence>
<evidence type="ECO:0000255" key="3"/>
<evidence type="ECO:0000255" key="4">
    <source>
        <dbReference type="PROSITE-ProRule" id="PRU00159"/>
    </source>
</evidence>
<evidence type="ECO:0000255" key="5">
    <source>
        <dbReference type="PROSITE-ProRule" id="PRU00316"/>
    </source>
</evidence>
<evidence type="ECO:0000255" key="6">
    <source>
        <dbReference type="PROSITE-ProRule" id="PRU00498"/>
    </source>
</evidence>
<evidence type="ECO:0000255" key="7">
    <source>
        <dbReference type="PROSITE-ProRule" id="PRU10028"/>
    </source>
</evidence>
<evidence type="ECO:0000256" key="8">
    <source>
        <dbReference type="SAM" id="MobiDB-lite"/>
    </source>
</evidence>
<evidence type="ECO:0000269" key="9">
    <source>
    </source>
</evidence>
<evidence type="ECO:0000269" key="10">
    <source>
    </source>
</evidence>
<evidence type="ECO:0000269" key="11">
    <source>
    </source>
</evidence>
<evidence type="ECO:0000269" key="12">
    <source>
    </source>
</evidence>
<evidence type="ECO:0000269" key="13">
    <source>
    </source>
</evidence>
<evidence type="ECO:0000269" key="14">
    <source>
    </source>
</evidence>
<evidence type="ECO:0000269" key="15">
    <source>
    </source>
</evidence>
<evidence type="ECO:0000269" key="16">
    <source>
    </source>
</evidence>
<evidence type="ECO:0000269" key="17">
    <source>
    </source>
</evidence>
<evidence type="ECO:0000269" key="18">
    <source>
    </source>
</evidence>
<evidence type="ECO:0000269" key="19">
    <source>
    </source>
</evidence>
<evidence type="ECO:0000269" key="20">
    <source>
    </source>
</evidence>
<evidence type="ECO:0000269" key="21">
    <source>
    </source>
</evidence>
<evidence type="ECO:0000269" key="22">
    <source>
    </source>
</evidence>
<evidence type="ECO:0000303" key="23">
    <source>
    </source>
</evidence>
<evidence type="ECO:0000303" key="24">
    <source>
    </source>
</evidence>
<evidence type="ECO:0000303" key="25">
    <source>
    </source>
</evidence>
<evidence type="ECO:0000305" key="26"/>
<evidence type="ECO:0000312" key="27">
    <source>
        <dbReference type="FlyBase" id="FBgn0283499"/>
    </source>
</evidence>
<evidence type="ECO:0007744" key="28">
    <source>
        <dbReference type="PDB" id="8CLS"/>
    </source>
</evidence>
<reference key="1">
    <citation type="journal article" date="1995" name="EMBO J.">
        <title>The Drosophila insulin receptor homolog: a gene essential for embryonic development encodes two receptor isoforms with different signaling potential.</title>
        <authorList>
            <person name="Fernandez R."/>
            <person name="Tabarini D."/>
            <person name="Azpiazu N."/>
            <person name="Frasch M."/>
            <person name="Schlessinger J."/>
        </authorList>
    </citation>
    <scope>NUCLEOTIDE SEQUENCE [MRNA]</scope>
    <scope>FUNCTION</scope>
    <scope>CATALYTIC ACTIVITY</scope>
    <scope>ACTIVITY REGULATION</scope>
    <scope>DEVELOPMENTAL STAGE</scope>
    <scope>PROTEOLYTIC PROCESSING</scope>
    <scope>DISRUPTION PHENOTYPE</scope>
</reference>
<reference key="2">
    <citation type="journal article" date="1995" name="J. Biol. Chem.">
        <title>The Drosophila insulin receptor contains a novel carboxyl-terminal extension likely to play an important role in signal transduction.</title>
        <authorList>
            <person name="Ruan Y."/>
            <person name="Chen C."/>
            <person name="Cao Y."/>
            <person name="Garofalo R.S."/>
        </authorList>
    </citation>
    <scope>NUCLEOTIDE SEQUENCE [GENOMIC DNA]</scope>
</reference>
<reference key="3">
    <citation type="journal article" date="2000" name="Science">
        <title>The genome sequence of Drosophila melanogaster.</title>
        <authorList>
            <person name="Adams M.D."/>
            <person name="Celniker S.E."/>
            <person name="Holt R.A."/>
            <person name="Evans C.A."/>
            <person name="Gocayne J.D."/>
            <person name="Amanatides P.G."/>
            <person name="Scherer S.E."/>
            <person name="Li P.W."/>
            <person name="Hoskins R.A."/>
            <person name="Galle R.F."/>
            <person name="George R.A."/>
            <person name="Lewis S.E."/>
            <person name="Richards S."/>
            <person name="Ashburner M."/>
            <person name="Henderson S.N."/>
            <person name="Sutton G.G."/>
            <person name="Wortman J.R."/>
            <person name="Yandell M.D."/>
            <person name="Zhang Q."/>
            <person name="Chen L.X."/>
            <person name="Brandon R.C."/>
            <person name="Rogers Y.-H.C."/>
            <person name="Blazej R.G."/>
            <person name="Champe M."/>
            <person name="Pfeiffer B.D."/>
            <person name="Wan K.H."/>
            <person name="Doyle C."/>
            <person name="Baxter E.G."/>
            <person name="Helt G."/>
            <person name="Nelson C.R."/>
            <person name="Miklos G.L.G."/>
            <person name="Abril J.F."/>
            <person name="Agbayani A."/>
            <person name="An H.-J."/>
            <person name="Andrews-Pfannkoch C."/>
            <person name="Baldwin D."/>
            <person name="Ballew R.M."/>
            <person name="Basu A."/>
            <person name="Baxendale J."/>
            <person name="Bayraktaroglu L."/>
            <person name="Beasley E.M."/>
            <person name="Beeson K.Y."/>
            <person name="Benos P.V."/>
            <person name="Berman B.P."/>
            <person name="Bhandari D."/>
            <person name="Bolshakov S."/>
            <person name="Borkova D."/>
            <person name="Botchan M.R."/>
            <person name="Bouck J."/>
            <person name="Brokstein P."/>
            <person name="Brottier P."/>
            <person name="Burtis K.C."/>
            <person name="Busam D.A."/>
            <person name="Butler H."/>
            <person name="Cadieu E."/>
            <person name="Center A."/>
            <person name="Chandra I."/>
            <person name="Cherry J.M."/>
            <person name="Cawley S."/>
            <person name="Dahlke C."/>
            <person name="Davenport L.B."/>
            <person name="Davies P."/>
            <person name="de Pablos B."/>
            <person name="Delcher A."/>
            <person name="Deng Z."/>
            <person name="Mays A.D."/>
            <person name="Dew I."/>
            <person name="Dietz S.M."/>
            <person name="Dodson K."/>
            <person name="Doup L.E."/>
            <person name="Downes M."/>
            <person name="Dugan-Rocha S."/>
            <person name="Dunkov B.C."/>
            <person name="Dunn P."/>
            <person name="Durbin K.J."/>
            <person name="Evangelista C.C."/>
            <person name="Ferraz C."/>
            <person name="Ferriera S."/>
            <person name="Fleischmann W."/>
            <person name="Fosler C."/>
            <person name="Gabrielian A.E."/>
            <person name="Garg N.S."/>
            <person name="Gelbart W.M."/>
            <person name="Glasser K."/>
            <person name="Glodek A."/>
            <person name="Gong F."/>
            <person name="Gorrell J.H."/>
            <person name="Gu Z."/>
            <person name="Guan P."/>
            <person name="Harris M."/>
            <person name="Harris N.L."/>
            <person name="Harvey D.A."/>
            <person name="Heiman T.J."/>
            <person name="Hernandez J.R."/>
            <person name="Houck J."/>
            <person name="Hostin D."/>
            <person name="Houston K.A."/>
            <person name="Howland T.J."/>
            <person name="Wei M.-H."/>
            <person name="Ibegwam C."/>
            <person name="Jalali M."/>
            <person name="Kalush F."/>
            <person name="Karpen G.H."/>
            <person name="Ke Z."/>
            <person name="Kennison J.A."/>
            <person name="Ketchum K.A."/>
            <person name="Kimmel B.E."/>
            <person name="Kodira C.D."/>
            <person name="Kraft C.L."/>
            <person name="Kravitz S."/>
            <person name="Kulp D."/>
            <person name="Lai Z."/>
            <person name="Lasko P."/>
            <person name="Lei Y."/>
            <person name="Levitsky A.A."/>
            <person name="Li J.H."/>
            <person name="Li Z."/>
            <person name="Liang Y."/>
            <person name="Lin X."/>
            <person name="Liu X."/>
            <person name="Mattei B."/>
            <person name="McIntosh T.C."/>
            <person name="McLeod M.P."/>
            <person name="McPherson D."/>
            <person name="Merkulov G."/>
            <person name="Milshina N.V."/>
            <person name="Mobarry C."/>
            <person name="Morris J."/>
            <person name="Moshrefi A."/>
            <person name="Mount S.M."/>
            <person name="Moy M."/>
            <person name="Murphy B."/>
            <person name="Murphy L."/>
            <person name="Muzny D.M."/>
            <person name="Nelson D.L."/>
            <person name="Nelson D.R."/>
            <person name="Nelson K.A."/>
            <person name="Nixon K."/>
            <person name="Nusskern D.R."/>
            <person name="Pacleb J.M."/>
            <person name="Palazzolo M."/>
            <person name="Pittman G.S."/>
            <person name="Pan S."/>
            <person name="Pollard J."/>
            <person name="Puri V."/>
            <person name="Reese M.G."/>
            <person name="Reinert K."/>
            <person name="Remington K."/>
            <person name="Saunders R.D.C."/>
            <person name="Scheeler F."/>
            <person name="Shen H."/>
            <person name="Shue B.C."/>
            <person name="Siden-Kiamos I."/>
            <person name="Simpson M."/>
            <person name="Skupski M.P."/>
            <person name="Smith T.J."/>
            <person name="Spier E."/>
            <person name="Spradling A.C."/>
            <person name="Stapleton M."/>
            <person name="Strong R."/>
            <person name="Sun E."/>
            <person name="Svirskas R."/>
            <person name="Tector C."/>
            <person name="Turner R."/>
            <person name="Venter E."/>
            <person name="Wang A.H."/>
            <person name="Wang X."/>
            <person name="Wang Z.-Y."/>
            <person name="Wassarman D.A."/>
            <person name="Weinstock G.M."/>
            <person name="Weissenbach J."/>
            <person name="Williams S.M."/>
            <person name="Woodage T."/>
            <person name="Worley K.C."/>
            <person name="Wu D."/>
            <person name="Yang S."/>
            <person name="Yao Q.A."/>
            <person name="Ye J."/>
            <person name="Yeh R.-F."/>
            <person name="Zaveri J.S."/>
            <person name="Zhan M."/>
            <person name="Zhang G."/>
            <person name="Zhao Q."/>
            <person name="Zheng L."/>
            <person name="Zheng X.H."/>
            <person name="Zhong F.N."/>
            <person name="Zhong W."/>
            <person name="Zhou X."/>
            <person name="Zhu S.C."/>
            <person name="Zhu X."/>
            <person name="Smith H.O."/>
            <person name="Gibbs R.A."/>
            <person name="Myers E.W."/>
            <person name="Rubin G.M."/>
            <person name="Venter J.C."/>
        </authorList>
    </citation>
    <scope>NUCLEOTIDE SEQUENCE [LARGE SCALE GENOMIC DNA]</scope>
    <source>
        <strain>Berkeley</strain>
    </source>
</reference>
<reference key="4">
    <citation type="journal article" date="2002" name="Genome Biol.">
        <title>Annotation of the Drosophila melanogaster euchromatic genome: a systematic review.</title>
        <authorList>
            <person name="Misra S."/>
            <person name="Crosby M.A."/>
            <person name="Mungall C.J."/>
            <person name="Matthews B.B."/>
            <person name="Campbell K.S."/>
            <person name="Hradecky P."/>
            <person name="Huang Y."/>
            <person name="Kaminker J.S."/>
            <person name="Millburn G.H."/>
            <person name="Prochnik S.E."/>
            <person name="Smith C.D."/>
            <person name="Tupy J.L."/>
            <person name="Whitfield E.J."/>
            <person name="Bayraktaroglu L."/>
            <person name="Berman B.P."/>
            <person name="Bettencourt B.R."/>
            <person name="Celniker S.E."/>
            <person name="de Grey A.D.N.J."/>
            <person name="Drysdale R.A."/>
            <person name="Harris N.L."/>
            <person name="Richter J."/>
            <person name="Russo S."/>
            <person name="Schroeder A.J."/>
            <person name="Shu S.Q."/>
            <person name="Stapleton M."/>
            <person name="Yamada C."/>
            <person name="Ashburner M."/>
            <person name="Gelbart W.M."/>
            <person name="Rubin G.M."/>
            <person name="Lewis S.E."/>
        </authorList>
    </citation>
    <scope>GENOME REANNOTATION</scope>
    <source>
        <strain>Berkeley</strain>
    </source>
</reference>
<reference key="5">
    <citation type="journal article" date="1986" name="Biochem. Biophys. Res. Commun.">
        <title>Cloning of a Drosophila cDNA encoding a polypeptide similar to the human insulin receptor precursor.</title>
        <authorList>
            <person name="Nishida Y."/>
            <person name="Hata M."/>
            <person name="Nishizuka Y."/>
            <person name="Rutter W.J."/>
            <person name="Ebina Y."/>
        </authorList>
    </citation>
    <scope>NUCLEOTIDE SEQUENCE [MRNA] OF 652-1851</scope>
    <source>
        <strain>Oregon-R</strain>
        <tissue>Embryo</tissue>
    </source>
</reference>
<reference key="6">
    <citation type="journal article" date="1986" name="Proc. Natl. Acad. Sci. U.S.A.">
        <title>Isolation of a Drosophila genomic sequence homologous to the kinase domain of the human insulin receptor and detection of the phosphorylated Drosophila receptor with an anti-peptide antibody.</title>
        <authorList>
            <person name="Petruzzelli L."/>
            <person name="Herrera R."/>
            <person name="Arenas-Garcia R."/>
            <person name="Fernandez R."/>
            <person name="Birnbaum M.J."/>
            <person name="Rosen O.M."/>
        </authorList>
    </citation>
    <scope>NUCLEOTIDE SEQUENCE [GENOMIC DNA] OF 1300-1598</scope>
    <scope>DEVELOPMENTAL STAGE</scope>
    <scope>AUTOPHOSPHORYLATION</scope>
</reference>
<reference key="7">
    <citation type="journal article" date="1988" name="Mol. Cell. Biol.">
        <title>Tissue localization of Drosophila melanogaster insulin receptor transcripts during development.</title>
        <authorList>
            <person name="Garofalo R.S."/>
            <person name="Rosen O.M."/>
        </authorList>
    </citation>
    <scope>DEVELOPMENTAL STAGE</scope>
</reference>
<reference key="8">
    <citation type="journal article" date="1996" name="Endocrinology">
        <title>The Drosophila insulin receptor is required for normal growth.</title>
        <authorList>
            <person name="Chen C."/>
            <person name="Jack J."/>
            <person name="Garofalo R.S."/>
        </authorList>
    </citation>
    <scope>FUNCTION</scope>
    <scope>CATALYTIC ACTIVITY</scope>
    <scope>ACTIVITY REGULATION</scope>
</reference>
<reference key="9">
    <citation type="journal article" date="1999" name="J. Biol. Chem.">
        <title>The carboxyl terminal extension of the Drosophila insulin receptor homologue binds IRS-1 and influences cell survival.</title>
        <authorList>
            <person name="Marin-Hincapie M."/>
            <person name="Garofalo R.S."/>
        </authorList>
    </citation>
    <scope>FUNCTION</scope>
    <scope>INTERACTION WITH CHICO</scope>
</reference>
<reference key="10">
    <citation type="journal article" date="2001" name="Curr. Biol.">
        <title>An evolutionarily conserved function of the Drosophila insulin receptor and insulin-like peptides in growth control.</title>
        <authorList>
            <person name="Brogiolo W."/>
            <person name="Stocker H."/>
            <person name="Ikeya T."/>
            <person name="Rintelen F."/>
            <person name="Fernandez R."/>
            <person name="Hafen E."/>
        </authorList>
    </citation>
    <scope>FUNCTION</scope>
    <scope>MUTAGENESIS OF ARG-1467; GLY-1539 AND GLY-1599</scope>
</reference>
<reference key="11">
    <citation type="journal article" date="2001" name="Science">
        <title>A mutant Drosophila insulin receptor homolog that extends life-span and impairs neuroendocrine function.</title>
        <authorList>
            <person name="Tatar M."/>
            <person name="Kopelman A."/>
            <person name="Epstein D."/>
            <person name="Tu M.P."/>
            <person name="Yin C.M."/>
            <person name="Garofalo R.S."/>
        </authorList>
    </citation>
    <scope>FUNCTION</scope>
    <scope>ACTIVITY REGULATION</scope>
</reference>
<reference key="12">
    <citation type="journal article" date="2003" name="Science">
        <title>Axons guided by insulin receptor in Drosophila visual system.</title>
        <authorList>
            <person name="Song J."/>
            <person name="Wu L."/>
            <person name="Chen Z."/>
            <person name="Kohanski R.A."/>
            <person name="Pick L."/>
        </authorList>
    </citation>
    <scope>FUNCTION</scope>
    <scope>INTERACTION WITH DOCK</scope>
    <scope>SUBCELLULAR LOCATION</scope>
    <scope>DEVELOPMENTAL STAGE</scope>
</reference>
<reference key="13">
    <citation type="journal article" date="2008" name="J. Proteome Res.">
        <title>Phosphoproteome analysis of Drosophila melanogaster embryos.</title>
        <authorList>
            <person name="Zhai B."/>
            <person name="Villen J."/>
            <person name="Beausoleil S.A."/>
            <person name="Mintseris J."/>
            <person name="Gygi S.P."/>
        </authorList>
    </citation>
    <scope>PHOSPHORYLATION [LARGE SCALE ANALYSIS] AT SER-1816</scope>
    <scope>IDENTIFICATION BY MASS SPECTROMETRY</scope>
    <source>
        <tissue>Embryo</tissue>
    </source>
</reference>
<reference key="14">
    <citation type="journal article" date="2009" name="Nat. Biotechnol.">
        <title>Mass-spectrometric identification and relative quantification of N-linked cell surface glycoproteins.</title>
        <authorList>
            <person name="Wollscheid B."/>
            <person name="Bausch-Fluck D."/>
            <person name="Henderson C."/>
            <person name="O'Brien R."/>
            <person name="Bibel M."/>
            <person name="Schiess R."/>
            <person name="Aebersold R."/>
            <person name="Watts J.D."/>
        </authorList>
    </citation>
    <scope>GLYCOSYLATION [LARGE SCALE ANALYSIS] AT ASN-824; ASN-839; ASN-864; ASN-898; ASN-1147 AND ASN-1218</scope>
    <scope>IDENTIFICATION BY MASS SPECTROMETRY</scope>
</reference>
<reference key="15">
    <citation type="journal article" date="2011" name="Biochem. J.">
        <title>Dock/Nck facilitates PTP61F/PTP1B regulation of insulin signalling.</title>
        <authorList>
            <person name="Wu C.L."/>
            <person name="Buszard B."/>
            <person name="Teng C.H."/>
            <person name="Chen W.L."/>
            <person name="Warr C.G."/>
            <person name="Tiganis T."/>
            <person name="Meng T.C."/>
        </authorList>
    </citation>
    <scope>DEPHOSPHORYLATION BY PTP61F</scope>
    <scope>PHOSPHORYLATION AT TYR-1549 AND TYR-1550</scope>
</reference>
<reference key="16">
    <citation type="journal article" date="2012" name="Open Biol.">
        <title>Drosophila poly suggests a novel role for the Elongator complex in insulin receptor-target of rapamycin signalling.</title>
        <authorList>
            <person name="Bolukbasi E."/>
            <person name="Vass S."/>
            <person name="Cobbe N."/>
            <person name="Nelson B."/>
            <person name="Simossis V."/>
            <person name="Dunbar D.R."/>
            <person name="Heck M.M."/>
        </authorList>
    </citation>
    <scope>INTERACTION WITH ELP6</scope>
    <scope>DISRUPTION PHENOTYPE</scope>
    <scope>IDENTIFICATION BY MASS SPECTROMETRY</scope>
</reference>
<reference key="17">
    <citation type="journal article" date="2023" name="IScience">
        <title>Fast drosophila enterocyte regrowth after infection involves a reverse metabolic flux driven by an amino acid transporter.</title>
        <authorList>
            <person name="Socha C."/>
            <person name="Pais I.S."/>
            <person name="Lee K.Z."/>
            <person name="Liu J."/>
            <person name="Liegeois S."/>
            <person name="Lestradet M."/>
            <person name="Ferrandon D."/>
        </authorList>
    </citation>
    <scope>FUNCTION</scope>
    <scope>DISRUPTION PHENOTYPE</scope>
</reference>
<reference evidence="28" key="18">
    <citation type="journal article" date="2023" name="Nat. Commun.">
        <title>Structural conservation of insulin/IGF signalling axis at the insulin receptors level in Drosophila and humans.</title>
        <authorList>
            <person name="Viola C.M."/>
            <person name="Frittmann O."/>
            <person name="Jenkins H.T."/>
            <person name="Shafi T."/>
            <person name="De Meyts P."/>
            <person name="Brzozowski A.M."/>
        </authorList>
    </citation>
    <scope>STRUCTURE BY ELECTRON MICROSCOPY (4.00 ANGSTROMS) OF 264-1310</scope>
    <scope>SUBUNIT</scope>
    <scope>DISULFIDE BONDS</scope>
</reference>
<name>INSR_DROME</name>
<feature type="signal peptide" evidence="3">
    <location>
        <begin position="1"/>
        <end position="43"/>
    </location>
</feature>
<feature type="chain" id="PRO_0000016715" description="Insulin-like receptor subunit alpha" evidence="21">
    <location>
        <begin status="unknown"/>
        <end position="1081"/>
    </location>
</feature>
<feature type="chain" id="PRO_0000016716" description="Insulin-like receptor subunit beta 1" evidence="21">
    <location>
        <begin position="1086"/>
        <end position="2144"/>
    </location>
</feature>
<feature type="chain" id="PRO_0000016717" description="Insulin-like receptor subunit beta 2" evidence="21">
    <location>
        <begin position="1086"/>
        <end status="unknown"/>
    </location>
</feature>
<feature type="chain" id="PRO_0000016718" description="60 kDa C-terminal fragment">
    <location>
        <begin status="unknown"/>
        <end position="2144"/>
    </location>
</feature>
<feature type="topological domain" description="Extracellular" evidence="26">
    <location>
        <begin status="unknown"/>
        <end position="1310"/>
    </location>
</feature>
<feature type="transmembrane region" description="Helical" evidence="3">
    <location>
        <begin position="1311"/>
        <end position="1331"/>
    </location>
</feature>
<feature type="topological domain" description="Cytoplasmic" evidence="26">
    <location>
        <begin position="1332"/>
        <end position="2144"/>
    </location>
</feature>
<feature type="repeat" description="FU" evidence="3">
    <location>
        <begin position="542"/>
        <end position="586"/>
    </location>
</feature>
<feature type="domain" description="Fibronectin type-III 1" evidence="5">
    <location>
        <begin position="825"/>
        <end position="927"/>
    </location>
</feature>
<feature type="domain" description="Fibronectin type-III 2" evidence="5">
    <location>
        <begin position="928"/>
        <end position="1026"/>
    </location>
</feature>
<feature type="domain" description="Fibronectin type-III 3" evidence="5">
    <location>
        <begin position="1210"/>
        <end position="1305"/>
    </location>
</feature>
<feature type="domain" description="Protein kinase" evidence="4">
    <location>
        <begin position="1371"/>
        <end position="1659"/>
    </location>
</feature>
<feature type="region of interest" description="Disordered" evidence="8">
    <location>
        <begin position="174"/>
        <end position="200"/>
    </location>
</feature>
<feature type="region of interest" description="Disordered" evidence="8">
    <location>
        <begin position="229"/>
        <end position="256"/>
    </location>
</feature>
<feature type="region of interest" description="Disordered" evidence="8">
    <location>
        <begin position="1053"/>
        <end position="1084"/>
    </location>
</feature>
<feature type="region of interest" description="Chico-binding" evidence="1">
    <location>
        <begin position="1351"/>
        <end position="1354"/>
    </location>
</feature>
<feature type="region of interest" description="Disordered" evidence="8">
    <location>
        <begin position="1690"/>
        <end position="1724"/>
    </location>
</feature>
<feature type="region of interest" description="Disordered" evidence="8">
    <location>
        <begin position="1788"/>
        <end position="1871"/>
    </location>
</feature>
<feature type="region of interest" description="Disordered" evidence="8">
    <location>
        <begin position="1886"/>
        <end position="1962"/>
    </location>
</feature>
<feature type="region of interest" description="Disordered" evidence="8">
    <location>
        <begin position="2020"/>
        <end position="2144"/>
    </location>
</feature>
<feature type="compositionally biased region" description="Basic residues" evidence="8">
    <location>
        <begin position="174"/>
        <end position="199"/>
    </location>
</feature>
<feature type="compositionally biased region" description="Low complexity" evidence="8">
    <location>
        <begin position="232"/>
        <end position="242"/>
    </location>
</feature>
<feature type="compositionally biased region" description="Low complexity" evidence="8">
    <location>
        <begin position="1849"/>
        <end position="1860"/>
    </location>
</feature>
<feature type="compositionally biased region" description="Low complexity" evidence="8">
    <location>
        <begin position="1894"/>
        <end position="1916"/>
    </location>
</feature>
<feature type="compositionally biased region" description="Acidic residues" evidence="8">
    <location>
        <begin position="2042"/>
        <end position="2062"/>
    </location>
</feature>
<feature type="compositionally biased region" description="Basic and acidic residues" evidence="8">
    <location>
        <begin position="2063"/>
        <end position="2073"/>
    </location>
</feature>
<feature type="compositionally biased region" description="Polar residues" evidence="8">
    <location>
        <begin position="2084"/>
        <end position="2120"/>
    </location>
</feature>
<feature type="active site" description="Proton acceptor" evidence="4 7">
    <location>
        <position position="1519"/>
    </location>
</feature>
<feature type="binding site" evidence="4">
    <location>
        <begin position="1377"/>
        <end position="1385"/>
    </location>
    <ligand>
        <name>ATP</name>
        <dbReference type="ChEBI" id="CHEBI:30616"/>
    </ligand>
</feature>
<feature type="binding site" evidence="4">
    <location>
        <position position="1405"/>
    </location>
    <ligand>
        <name>ATP</name>
        <dbReference type="ChEBI" id="CHEBI:30616"/>
    </ligand>
</feature>
<feature type="modified residue" description="Phosphotyrosine; by autocatalysis" evidence="1">
    <location>
        <position position="1354"/>
    </location>
</feature>
<feature type="modified residue" description="Phosphotyrosine; by autocatalysis" evidence="1">
    <location>
        <position position="1545"/>
    </location>
</feature>
<feature type="modified residue" description="Phosphotyrosine; by autocatalysis" evidence="1 15">
    <location>
        <position position="1549"/>
    </location>
</feature>
<feature type="modified residue" description="Phosphotyrosine; by autocatalysis" evidence="1 15">
    <location>
        <position position="1550"/>
    </location>
</feature>
<feature type="modified residue" description="Phosphoserine" evidence="13">
    <location>
        <position position="1816"/>
    </location>
</feature>
<feature type="glycosylation site" description="N-linked (GlcNAc...) asparagine" evidence="6">
    <location>
        <position position="74"/>
    </location>
</feature>
<feature type="glycosylation site" description="N-linked (GlcNAc...) asparagine" evidence="6">
    <location>
        <position position="203"/>
    </location>
</feature>
<feature type="glycosylation site" description="N-linked (GlcNAc...) asparagine" evidence="6">
    <location>
        <position position="265"/>
    </location>
</feature>
<feature type="glycosylation site" description="N-linked (GlcNAc...) asparagine" evidence="6">
    <location>
        <position position="356"/>
    </location>
</feature>
<feature type="glycosylation site" description="N-linked (GlcNAc...) asparagine" evidence="6">
    <location>
        <position position="376"/>
    </location>
</feature>
<feature type="glycosylation site" description="N-linked (GlcNAc...) asparagine" evidence="6">
    <location>
        <position position="406"/>
    </location>
</feature>
<feature type="glycosylation site" description="N-linked (GlcNAc...) asparagine" evidence="6">
    <location>
        <position position="468"/>
    </location>
</feature>
<feature type="glycosylation site" description="N-linked (GlcNAc...) asparagine" evidence="6">
    <location>
        <position position="509"/>
    </location>
</feature>
<feature type="glycosylation site" description="N-linked (GlcNAc...) asparagine" evidence="6">
    <location>
        <position position="561"/>
    </location>
</feature>
<feature type="glycosylation site" description="N-linked (GlcNAc...) asparagine" evidence="6">
    <location>
        <position position="569"/>
    </location>
</feature>
<feature type="glycosylation site" description="N-linked (GlcNAc...) asparagine" evidence="6">
    <location>
        <position position="751"/>
    </location>
</feature>
<feature type="glycosylation site" description="N-linked (GlcNAc...) asparagine" evidence="6">
    <location>
        <position position="810"/>
    </location>
</feature>
<feature type="glycosylation site" description="N-linked (GlcNAc...) asparagine" evidence="6 14">
    <location>
        <position position="824"/>
    </location>
</feature>
<feature type="glycosylation site" description="N-linked (GlcNAc...) asparagine" evidence="6 14">
    <location>
        <position position="839"/>
    </location>
</feature>
<feature type="glycosylation site" description="N-linked (GlcNAc...) asparagine" evidence="6 14">
    <location>
        <position position="864"/>
    </location>
</feature>
<feature type="glycosylation site" description="N-linked (GlcNAc...) asparagine" evidence="6 14">
    <location>
        <position position="898"/>
    </location>
</feature>
<feature type="glycosylation site" description="N-linked (GlcNAc...) asparagine" evidence="6">
    <location>
        <position position="946"/>
    </location>
</feature>
<feature type="glycosylation site" description="N-linked (GlcNAc...) asparagine" evidence="6">
    <location>
        <position position="1053"/>
    </location>
</feature>
<feature type="glycosylation site" description="N-linked (GlcNAc...) asparagine" evidence="6 14">
    <location>
        <position position="1147"/>
    </location>
</feature>
<feature type="glycosylation site" description="N-linked (GlcNAc...) asparagine" evidence="6 14">
    <location>
        <position position="1218"/>
    </location>
</feature>
<feature type="glycosylation site" description="N-linked (GlcNAc...) asparagine" evidence="6">
    <location>
        <position position="1265"/>
    </location>
</feature>
<feature type="disulfide bond" evidence="1">
    <location>
        <begin position="531"/>
        <end position="539"/>
    </location>
</feature>
<feature type="disulfide bond" evidence="1">
    <location>
        <begin position="535"/>
        <end position="545"/>
    </location>
</feature>
<feature type="disulfide bond" evidence="1">
    <location>
        <begin position="546"/>
        <end position="554"/>
    </location>
</feature>
<feature type="disulfide bond" evidence="1">
    <location>
        <begin position="550"/>
        <end position="564"/>
    </location>
</feature>
<feature type="disulfide bond" evidence="1">
    <location>
        <begin position="567"/>
        <end position="576"/>
    </location>
</feature>
<feature type="disulfide bond" evidence="1">
    <location>
        <begin position="580"/>
        <end position="591"/>
    </location>
</feature>
<feature type="disulfide bond" evidence="1">
    <location>
        <begin position="597"/>
        <end position="618"/>
    </location>
</feature>
<feature type="disulfide bond" evidence="1">
    <location>
        <begin position="635"/>
        <end position="638"/>
    </location>
</feature>
<feature type="mutagenesis site" description="In allele 353; reduction in head size." evidence="10">
    <original>R</original>
    <variation>C</variation>
    <location>
        <position position="1467"/>
    </location>
</feature>
<feature type="mutagenesis site" description="In allele 339; strong reduction in head size." evidence="10">
    <original>G</original>
    <variation>E</variation>
    <location>
        <position position="1539"/>
    </location>
</feature>
<feature type="mutagenesis site" description="In allele 211; reduction in head size." evidence="10">
    <original>G</original>
    <variation>R</variation>
    <location>
        <position position="1599"/>
    </location>
</feature>
<feature type="sequence conflict" description="In Ref. 2; AAC47458." evidence="26" ref="2">
    <original>T</original>
    <variation>ATTAK</variation>
    <location>
        <position position="29"/>
    </location>
</feature>
<feature type="sequence conflict" description="In Ref. 1; AAA68953." evidence="26" ref="1">
    <original>V</original>
    <variation>D</variation>
    <location>
        <position position="89"/>
    </location>
</feature>
<feature type="sequence conflict" description="In Ref. 1; AAA68953 and 2; AAC47458." evidence="26" ref="1 2">
    <original>Q</original>
    <variation>H</variation>
    <location>
        <position position="157"/>
    </location>
</feature>
<feature type="sequence conflict" description="In Ref. 1; AAA68953." evidence="26" ref="1">
    <original>F</original>
    <variation>C</variation>
    <location>
        <position position="164"/>
    </location>
</feature>
<feature type="sequence conflict" description="In Ref. 1; AAA68953 and 2; AAC47458." evidence="26" ref="1 2">
    <original>H</original>
    <variation>L</variation>
    <location>
        <position position="197"/>
    </location>
</feature>
<feature type="sequence conflict" description="In Ref. 1; AAA68953 and 2; AAC47458." evidence="26" ref="1 2">
    <original>S</original>
    <variation>T</variation>
    <location>
        <position position="319"/>
    </location>
</feature>
<feature type="sequence conflict" description="In Ref. 1; AAA68953 and 2; AAC47458." evidence="26" ref="1 2">
    <original>T</original>
    <variation>P</variation>
    <location>
        <position position="322"/>
    </location>
</feature>
<feature type="sequence conflict" description="In Ref. 1; AAA68953." evidence="26" ref="1">
    <original>T</original>
    <variation>S</variation>
    <location>
        <position position="470"/>
    </location>
</feature>
<feature type="sequence conflict" description="In Ref. 1; AAA68953." evidence="26" ref="1">
    <original>R</original>
    <variation>S</variation>
    <location>
        <position position="485"/>
    </location>
</feature>
<feature type="sequence conflict" description="In Ref. 1; AAA68953 and 2; AAC47458." evidence="26" ref="1 2">
    <original>T</original>
    <variation>N</variation>
    <location>
        <position position="501"/>
    </location>
</feature>
<feature type="sequence conflict" description="In Ref. 5; AAA28644." evidence="26" ref="5">
    <original>DSLERARE</original>
    <variation>PPPPPPPL</variation>
    <location>
        <begin position="653"/>
        <end position="660"/>
    </location>
</feature>
<feature type="sequence conflict" description="In Ref. 5; AAA28644." evidence="26" ref="5">
    <original>RES</original>
    <variation>GER</variation>
    <location>
        <begin position="679"/>
        <end position="681"/>
    </location>
</feature>
<feature type="sequence conflict" description="In Ref. 5; AAA28644." evidence="26" ref="5">
    <original>ISGDP</original>
    <variation>LAAI</variation>
    <location>
        <begin position="723"/>
        <end position="727"/>
    </location>
</feature>
<feature type="sequence conflict" description="In Ref. 1; AAA68953." evidence="26" ref="1">
    <original>V</original>
    <variation>E</variation>
    <location>
        <position position="793"/>
    </location>
</feature>
<feature type="sequence conflict" description="In Ref. 1; AAA68953." evidence="26" ref="1">
    <original>M</original>
    <variation>S</variation>
    <location>
        <position position="822"/>
    </location>
</feature>
<feature type="sequence conflict" description="In Ref. 5; AAA28644." evidence="26" ref="5">
    <original>NSTKSSDDPCDDRW</original>
    <variation>TQLKAVTIHAMIAG</variation>
    <location>
        <begin position="864"/>
        <end position="877"/>
    </location>
</feature>
<feature type="sequence conflict" description="In Ref. 1; AAA68953 and 5; AAA28644." evidence="26" ref="1 5">
    <location>
        <begin position="933"/>
        <end position="935"/>
    </location>
</feature>
<feature type="sequence conflict" description="In Ref. 1; AAA68953 and 5; AAA28644." evidence="26" ref="1 5">
    <original>KPYGV</original>
    <variation>NLMA</variation>
    <location>
        <begin position="954"/>
        <end position="958"/>
    </location>
</feature>
<feature type="sequence conflict" description="In Ref. 5; AAA28644." evidence="26" ref="5">
    <location>
        <position position="1161"/>
    </location>
</feature>
<feature type="sequence conflict" description="In Ref. 5; AAA28644." evidence="26" ref="5">
    <original>LCSDYD</original>
    <variation>SAAIIH</variation>
    <location>
        <begin position="1187"/>
        <end position="1192"/>
    </location>
</feature>
<feature type="sequence conflict" description="In Ref. 1; AAA68953 and 5; AAA28644." evidence="26" ref="1 5">
    <original>VRVRWTPPV</original>
    <variation>ATFSLGRHQL</variation>
    <location>
        <begin position="1224"/>
        <end position="1232"/>
    </location>
</feature>
<feature type="sequence conflict" description="In Ref. 5; AAA28644." evidence="26" ref="5">
    <original>DFNQTAGYLIKLNEGLYSFR</original>
    <variation>RLQPDCRLFNKAQRGPLQLQ</variation>
    <location>
        <begin position="1263"/>
        <end position="1282"/>
    </location>
</feature>
<feature type="sequence conflict" description="In Ref. 2; AAA28645." evidence="26" ref="2">
    <original>IKVE</original>
    <variation>LIQQ</variation>
    <location>
        <begin position="1300"/>
        <end position="1303"/>
    </location>
</feature>
<feature type="sequence conflict" description="In Ref. 5; AAA28644." evidence="26" ref="5">
    <original>GD</original>
    <variation>VE</variation>
    <location>
        <begin position="1457"/>
        <end position="1458"/>
    </location>
</feature>
<feature type="sequence conflict" description="In Ref. 5; AAA28644." evidence="26" ref="5">
    <original>EERDEAMMTYLNRIGV</original>
    <variation>RSGMRPDDVSLIAWM</variation>
    <location>
        <begin position="1469"/>
        <end position="1484"/>
    </location>
</feature>
<feature type="sequence conflict" description="In Ref. 2; AAA28645." evidence="26" ref="2">
    <original>EAMMTYL</original>
    <variation>DGHDDVS</variation>
    <location>
        <begin position="1473"/>
        <end position="1479"/>
    </location>
</feature>
<feature type="sequence conflict" description="In Ref. 5; AAA28644." evidence="26" ref="5">
    <original>M</original>
    <variation>V</variation>
    <location>
        <position position="1499"/>
    </location>
</feature>
<feature type="sequence conflict" description="In Ref. 2; AAA28645." evidence="26" ref="2">
    <original>DL</original>
    <variation>PF</variation>
    <location>
        <begin position="1519"/>
        <end position="1520"/>
    </location>
</feature>
<feature type="sequence conflict" description="In Ref. 2; AAA28645." evidence="26" ref="2">
    <original>RDGVYSSASD</original>
    <variation>QAWCLLLVPVT</variation>
    <location>
        <begin position="1569"/>
        <end position="1578"/>
    </location>
</feature>
<feature type="sequence conflict" description="In Ref. 2; AAA28645." evidence="26" ref="2">
    <original>TLAAQPYQ</original>
    <variation>ILSLWRSP</variation>
    <location>
        <begin position="1591"/>
        <end position="1598"/>
    </location>
</feature>
<feature type="sequence conflict" description="In Ref. 2; AAC47458 and 5; AAA28644." evidence="26" ref="2 5">
    <original>N</original>
    <variation>H</variation>
    <location>
        <position position="1682"/>
    </location>
</feature>
<feature type="sequence conflict" description="In Ref. 5; AAA28644." evidence="26" ref="5">
    <original>T</original>
    <variation>S</variation>
    <location>
        <position position="1706"/>
    </location>
</feature>
<feature type="sequence conflict" description="In Ref. 2; AAC47458." evidence="26" ref="2">
    <original>Q</original>
    <variation>E</variation>
    <location>
        <position position="1715"/>
    </location>
</feature>
<feature type="sequence conflict" description="In Ref. 5; AAA28644." evidence="26" ref="5">
    <original>IYDPSPKC</original>
    <variation>STIPVRNG</variation>
    <location>
        <begin position="1792"/>
        <end position="1799"/>
    </location>
</feature>
<feature type="sequence conflict" description="In Ref. 5; AAA28644." evidence="26" ref="5">
    <original>Q</original>
    <variation>K</variation>
    <location>
        <position position="1828"/>
    </location>
</feature>
<feature type="sequence conflict" description="In Ref. 5; AAA28644." evidence="26" ref="5">
    <original>TA</original>
    <variation>GI</variation>
    <location>
        <begin position="1850"/>
        <end position="1851"/>
    </location>
</feature>
<feature type="sequence conflict" description="In Ref. 1; AAA68953." evidence="26" ref="1">
    <original>SAG</original>
    <variation>FTT</variation>
    <location>
        <begin position="1852"/>
        <end position="1854"/>
    </location>
</feature>
<feature type="sequence conflict" description="In Ref. 2; AAC47458." evidence="26" ref="2">
    <original>G</original>
    <variation>A</variation>
    <location>
        <position position="1854"/>
    </location>
</feature>
<feature type="sequence conflict" description="In Ref. 1; AAA68953." evidence="26" ref="1">
    <original>F</original>
    <variation>Y</variation>
    <location>
        <position position="1887"/>
    </location>
</feature>
<protein>
    <recommendedName>
        <fullName>Insulin-like receptor</fullName>
        <shortName evidence="25">dIR</shortName>
        <shortName evidence="24">dInr</shortName>
        <shortName evidence="23">dmIR</shortName>
        <ecNumber evidence="7 22">2.7.10.1</ecNumber>
    </recommendedName>
    <alternativeName>
        <fullName>Insulin receptor homolog</fullName>
        <shortName>dIRH</shortName>
    </alternativeName>
    <alternativeName>
        <fullName evidence="7">Receptor protein-tyrosine kinase InR</fullName>
    </alternativeName>
    <component>
        <recommendedName>
            <fullName>Insulin-like receptor subunit alpha</fullName>
        </recommendedName>
    </component>
    <component>
        <recommendedName>
            <fullName>Insulin-like receptor subunit beta 1</fullName>
        </recommendedName>
        <alternativeName>
            <fullName evidence="26">Insulin-like receptor subunit beta 170 kDa form</fullName>
            <shortName evidence="24">beta170</shortName>
        </alternativeName>
    </component>
    <component>
        <recommendedName>
            <fullName>Insulin-like receptor subunit beta 2</fullName>
        </recommendedName>
        <alternativeName>
            <fullName evidence="26">Insulin-like receptor subunit beta 90 kDa form</fullName>
            <shortName evidence="24">beta90</shortName>
        </alternativeName>
    </component>
    <component>
        <recommendedName>
            <fullName evidence="26">60 kDa C-terminal fragment</fullName>
        </recommendedName>
        <alternativeName>
            <fullName evidence="24">Insulin-like receptor free C-terminus</fullName>
        </alternativeName>
    </component>
</protein>
<sequence length="2144" mass="239776">MFNMPRGVTKSKSKRGKIKMENDMAAAATTTACTLGHICVLCRQEMLLDTCCCRQAVEAVDSPASSEEAYSSSNSSSCQASSEISAEEVWFLSHDDIVLCRRPKFDEVETTGKKRDVKCSGHQCSNECDDGSTKNNRQQRENFNIFSNCHNILRTLQSLLLLMFNCGIFNKRRRRQHQQQHHHHYQHHHQQHHQQHHQRQQANVSYTKFLLLLQTLAAATTRLSLSPKNYKQQQQLQHNQQLPRATPQQKQQEKDRHKCFHYKHNYSYSPGISLLLFILLANTLAIQAVVLPAHQQHLLHNDIADGLDKTALSVSGTQSRWTRSESNPTMRLSQNVKPCKSMDIRNMVSHFNQLENCTVIEGFLLIDLINDASPLNRSFPKLTEVTDYIIIYRVTGLHSLSKIFPNLSVIRGNKLFDGYALVVYSNFDLMDLGLHKLRSITRGGVRIEKNHKLCYDRTIDWLEILAENETQLVVLTENGKEKECRLSKCPGEIRIEEGHDTTAIEGELNASCQLHNNRRLCWNSKLCQTKCPEKCRNNCIDEHTCCSQDCLGGCVIDKNGNESCISCRNVSFNNICMDSCPKGYYQFDSRCVTANECITLTKFETNSVYSGIPYNGQCITHCPTGYQKSENKRMCEPCPGGKCDKECSSGLIDSLERAREFHGCTIITGTEPLTISIKRESGAHVMDELKYGLAAVHKIQSSLMVHLTYGLKSLKFFQSLTEISGDPPMDADKYALYVLDNRDLDELWGPNQTVFIRKGGVFFHFNPKLCVSTINQLLPMLASKPKFFEKSDVGADSNGNRGSCGTAVLNVTLQSVGANSAMLNVTTKVEIGEPQKPSNATIVFKDPRAFIGFVFYHMIDPYGNSTKSSDDPCDDRWKVSSPEKSGVMVLSNLIPYTNYSYYVRTMAISSELTNAESDVKNFRTNPGRPSKVTEVVATAISDSKINVTWSYLDKPYGVLTRYFIKAKLINRPTRNNNRDYCTEPLVKAMENDLPATTPTKKISDPLAGDCKCVEGSKKTSSQEYDDRKVQAGMEFENALQNFIFVPNIRKSKNGSSDKSDGAEGAALDSNAIPNGGATNPSRRRRDVALEPELDDVEGSVLLRHVRSITDDTDAFFEKDDENTYKDEEDLSSNKQFYEVFAKELPPNQTHFVFEKLRHFTRYAIFVVACREEIPSEKLRDTSFKKSLCSDYDTVFQTTKRKKFADIVMDLKVDLEHANNTESPVRVRWTPPVDPNGEIVTYEVAYKLQKPDQVEEKKCIPAADFNQTAGYLIKLNEGLYSFRVRANSIAGYGDFTEVEHIKVEPPPSYAKVFFWLLGIGLAFLIVSLFGYVCYLHKRKVPSNDLHMNTEVNPFYASMQYIPDDWEVLRENIIQLAPLGQGSFGMVYEGILKSFPPNGVDRECAIKTVNENATDRERTNFLSEASVMKEFDTYHVVRLLGVCSRGQPALVVMELMKKGDLKSYLRAHRPEERDEAMMTYLNRIGVTGNVQPPTYGRIYQMAIEIADGMAYLAAKKFVHRDLAARNCMVADDLTVKIGDFGMTRDIYETDYYRKGTKGLLPVRWMPPESLRDGVYSSASDVFSFGVVLWEMATLAAQPYQGLSNEQVLRYVIDGGVMERPENCPDFLHKLMQRCWHHRSSARPSFLDIIAYLEPQCPNSQFKEVSFYHSEAGLQHREKERKERNQLDAFAAVPLDQDLQDREQQEDATTPLRMGDYQQNSSLDQPPESPIAMVDDQGSHLPFSLPSGFIASSTPDGQTVMATAFQNIPAAQGDISATYVVPDADALDGDRGYEIYDPSPKCAELPTSRSGSTGGGKLSGEQHLLPRKGRQPTIMSSSMPDDVIGGSSLQPSTASAGSSNASSHTGRPSLKKTVADSVRNKANFINRHLFNHKRTGSNASHKSNASNAPSTSSNTNLTSHPVAMGNLGTIESGGSGSAGSYTGTPRFYTPSATPGGGSGMAISDNPNYRLLDESIASEQATILTTSSPNPNYEMMHPPTSLVSTNPNYMPMNETPVQMAGVTISHNPNYQPMQAPLNARQSQSSSDEDNEQEEDDEDEDDDVDDEHVEHIKMERMPLSRPRQRALPSKTQPPRSRSVSQTRKSPTNPNSGIGATGAGNRSNLLKENWLRPASTPRPPPPNGFIGREA</sequence>